<accession>A6H2D9</accession>
<organism>
    <name type="scientific">Flavobacterium psychrophilum (strain ATCC 49511 / DSM 21280 / CIP 103535 / JIP02/86)</name>
    <dbReference type="NCBI Taxonomy" id="402612"/>
    <lineage>
        <taxon>Bacteria</taxon>
        <taxon>Pseudomonadati</taxon>
        <taxon>Bacteroidota</taxon>
        <taxon>Flavobacteriia</taxon>
        <taxon>Flavobacteriales</taxon>
        <taxon>Flavobacteriaceae</taxon>
        <taxon>Flavobacterium</taxon>
    </lineage>
</organism>
<comment type="function">
    <text evidence="1">F(1)F(0) ATP synthase produces ATP from ADP in the presence of a proton or sodium gradient. F-type ATPases consist of two structural domains, F(1) containing the extramembraneous catalytic core and F(0) containing the membrane proton channel, linked together by a central stalk and a peripheral stalk. During catalysis, ATP synthesis in the catalytic domain of F(1) is coupled via a rotary mechanism of the central stalk subunits to proton translocation.</text>
</comment>
<comment type="function">
    <text evidence="1">Component of the F(0) channel, it forms part of the peripheral stalk, linking F(1) to F(0).</text>
</comment>
<comment type="subunit">
    <text evidence="1">F-type ATPases have 2 components, F(1) - the catalytic core - and F(0) - the membrane proton channel. F(1) has five subunits: alpha(3), beta(3), gamma(1), delta(1), epsilon(1). F(0) has three main subunits: a(1), b(2) and c(10-14). The alpha and beta chains form an alternating ring which encloses part of the gamma chain. F(1) is attached to F(0) by a central stalk formed by the gamma and epsilon chains, while a peripheral stalk is formed by the delta and b chains.</text>
</comment>
<comment type="subcellular location">
    <subcellularLocation>
        <location evidence="1">Cell inner membrane</location>
        <topology evidence="1">Single-pass membrane protein</topology>
    </subcellularLocation>
</comment>
<comment type="similarity">
    <text evidence="1">Belongs to the ATPase B chain family.</text>
</comment>
<proteinExistence type="inferred from homology"/>
<evidence type="ECO:0000255" key="1">
    <source>
        <dbReference type="HAMAP-Rule" id="MF_01398"/>
    </source>
</evidence>
<name>ATPF_FLAPJ</name>
<feature type="chain" id="PRO_0000368486" description="ATP synthase subunit b">
    <location>
        <begin position="1"/>
        <end position="166"/>
    </location>
</feature>
<feature type="transmembrane region" description="Helical" evidence="1">
    <location>
        <begin position="7"/>
        <end position="27"/>
    </location>
</feature>
<reference key="1">
    <citation type="journal article" date="2007" name="Nat. Biotechnol.">
        <title>Complete genome sequence of the fish pathogen Flavobacterium psychrophilum.</title>
        <authorList>
            <person name="Duchaud E."/>
            <person name="Boussaha M."/>
            <person name="Loux V."/>
            <person name="Bernardet J.-F."/>
            <person name="Michel C."/>
            <person name="Kerouault B."/>
            <person name="Mondot S."/>
            <person name="Nicolas P."/>
            <person name="Bossy R."/>
            <person name="Caron C."/>
            <person name="Bessieres P."/>
            <person name="Gibrat J.-F."/>
            <person name="Claverol S."/>
            <person name="Dumetz F."/>
            <person name="Le Henaff M."/>
            <person name="Benmansour A."/>
        </authorList>
    </citation>
    <scope>NUCLEOTIDE SEQUENCE [LARGE SCALE GENOMIC DNA]</scope>
    <source>
        <strain>ATCC 49511 / DSM 21280 / CIP 103535 / JIP02/86</strain>
    </source>
</reference>
<dbReference type="EMBL" id="AM398681">
    <property type="protein sequence ID" value="CAL44513.1"/>
    <property type="molecule type" value="Genomic_DNA"/>
</dbReference>
<dbReference type="RefSeq" id="WP_011964547.1">
    <property type="nucleotide sequence ID" value="NC_009613.3"/>
</dbReference>
<dbReference type="RefSeq" id="YP_001297314.1">
    <property type="nucleotide sequence ID" value="NC_009613.3"/>
</dbReference>
<dbReference type="SMR" id="A6H2D9"/>
<dbReference type="STRING" id="402612.FP2460"/>
<dbReference type="EnsemblBacteria" id="CAL44513">
    <property type="protein sequence ID" value="CAL44513"/>
    <property type="gene ID" value="FP2460"/>
</dbReference>
<dbReference type="KEGG" id="fps:FP2460"/>
<dbReference type="PATRIC" id="fig|402612.5.peg.2518"/>
<dbReference type="eggNOG" id="COG0711">
    <property type="taxonomic scope" value="Bacteria"/>
</dbReference>
<dbReference type="HOGENOM" id="CLU_079215_4_1_10"/>
<dbReference type="OrthoDB" id="9795289at2"/>
<dbReference type="Proteomes" id="UP000006394">
    <property type="component" value="Chromosome"/>
</dbReference>
<dbReference type="GO" id="GO:0005886">
    <property type="term" value="C:plasma membrane"/>
    <property type="evidence" value="ECO:0007669"/>
    <property type="project" value="UniProtKB-SubCell"/>
</dbReference>
<dbReference type="GO" id="GO:0045259">
    <property type="term" value="C:proton-transporting ATP synthase complex"/>
    <property type="evidence" value="ECO:0007669"/>
    <property type="project" value="UniProtKB-KW"/>
</dbReference>
<dbReference type="GO" id="GO:0046933">
    <property type="term" value="F:proton-transporting ATP synthase activity, rotational mechanism"/>
    <property type="evidence" value="ECO:0007669"/>
    <property type="project" value="UniProtKB-UniRule"/>
</dbReference>
<dbReference type="GO" id="GO:0046961">
    <property type="term" value="F:proton-transporting ATPase activity, rotational mechanism"/>
    <property type="evidence" value="ECO:0007669"/>
    <property type="project" value="TreeGrafter"/>
</dbReference>
<dbReference type="CDD" id="cd06503">
    <property type="entry name" value="ATP-synt_Fo_b"/>
    <property type="match status" value="1"/>
</dbReference>
<dbReference type="Gene3D" id="1.20.5.620">
    <property type="entry name" value="F1F0 ATP synthase subunit B, membrane domain"/>
    <property type="match status" value="1"/>
</dbReference>
<dbReference type="HAMAP" id="MF_01398">
    <property type="entry name" value="ATP_synth_b_bprime"/>
    <property type="match status" value="1"/>
</dbReference>
<dbReference type="InterPro" id="IPR028987">
    <property type="entry name" value="ATP_synth_B-like_membr_sf"/>
</dbReference>
<dbReference type="InterPro" id="IPR002146">
    <property type="entry name" value="ATP_synth_b/b'su_bac/chlpt"/>
</dbReference>
<dbReference type="InterPro" id="IPR005864">
    <property type="entry name" value="ATP_synth_F0_bsu_bac"/>
</dbReference>
<dbReference type="InterPro" id="IPR050059">
    <property type="entry name" value="ATP_synthase_B_chain"/>
</dbReference>
<dbReference type="NCBIfam" id="TIGR01144">
    <property type="entry name" value="ATP_synt_b"/>
    <property type="match status" value="1"/>
</dbReference>
<dbReference type="NCBIfam" id="NF011041">
    <property type="entry name" value="PRK14471.1"/>
    <property type="match status" value="1"/>
</dbReference>
<dbReference type="PANTHER" id="PTHR33445:SF1">
    <property type="entry name" value="ATP SYNTHASE SUBUNIT B"/>
    <property type="match status" value="1"/>
</dbReference>
<dbReference type="PANTHER" id="PTHR33445">
    <property type="entry name" value="ATP SYNTHASE SUBUNIT B', CHLOROPLASTIC"/>
    <property type="match status" value="1"/>
</dbReference>
<dbReference type="Pfam" id="PF00430">
    <property type="entry name" value="ATP-synt_B"/>
    <property type="match status" value="1"/>
</dbReference>
<dbReference type="SUPFAM" id="SSF81573">
    <property type="entry name" value="F1F0 ATP synthase subunit B, membrane domain"/>
    <property type="match status" value="1"/>
</dbReference>
<keyword id="KW-0066">ATP synthesis</keyword>
<keyword id="KW-0997">Cell inner membrane</keyword>
<keyword id="KW-1003">Cell membrane</keyword>
<keyword id="KW-0138">CF(0)</keyword>
<keyword id="KW-0375">Hydrogen ion transport</keyword>
<keyword id="KW-0406">Ion transport</keyword>
<keyword id="KW-0472">Membrane</keyword>
<keyword id="KW-1185">Reference proteome</keyword>
<keyword id="KW-0812">Transmembrane</keyword>
<keyword id="KW-1133">Transmembrane helix</keyword>
<keyword id="KW-0813">Transport</keyword>
<gene>
    <name evidence="1" type="primary">atpF</name>
    <name type="ordered locus">FP2460</name>
</gene>
<sequence>MEQLLGQFSLGLFILQIILFVGLILLLKKFAWKPILDAVNEREDGIKNALLSAENARTEMQNLQADNQRILQEARLERDNMLKDAREIKEKMIADSKTEAQAQGIKMIEQAKAAIESEKNAAMAELKSQVSNLSIEIAEKLLKDELSNKDAQTKLVEKMLGDVKLN</sequence>
<protein>
    <recommendedName>
        <fullName evidence="1">ATP synthase subunit b</fullName>
    </recommendedName>
    <alternativeName>
        <fullName evidence="1">ATP synthase F(0) sector subunit b</fullName>
    </alternativeName>
    <alternativeName>
        <fullName evidence="1">ATPase subunit I</fullName>
    </alternativeName>
    <alternativeName>
        <fullName evidence="1">F-type ATPase subunit b</fullName>
        <shortName evidence="1">F-ATPase subunit b</shortName>
    </alternativeName>
</protein>